<organism>
    <name type="scientific">Arabidopsis thaliana</name>
    <name type="common">Mouse-ear cress</name>
    <dbReference type="NCBI Taxonomy" id="3702"/>
    <lineage>
        <taxon>Eukaryota</taxon>
        <taxon>Viridiplantae</taxon>
        <taxon>Streptophyta</taxon>
        <taxon>Embryophyta</taxon>
        <taxon>Tracheophyta</taxon>
        <taxon>Spermatophyta</taxon>
        <taxon>Magnoliopsida</taxon>
        <taxon>eudicotyledons</taxon>
        <taxon>Gunneridae</taxon>
        <taxon>Pentapetalae</taxon>
        <taxon>rosids</taxon>
        <taxon>malvids</taxon>
        <taxon>Brassicales</taxon>
        <taxon>Brassicaceae</taxon>
        <taxon>Camelineae</taxon>
        <taxon>Arabidopsis</taxon>
    </lineage>
</organism>
<sequence>MEACSRKRRRRRAYTTSTTGYAAVFFCGIFVFAQFGISSSALFAPDHYPSLPRKAGHFHEMASFQAPKATVSFTGQRREEENRDEVYKDDKRLVHTGPNPLHN</sequence>
<comment type="function">
    <molecule>CLE16p</molecule>
    <text evidence="5 6">Extracellular signal peptide that regulates cell fate. Represses root apical meristem maintenance. Regulates the transition of protophloem cells from proliferation to differentiation, thus impinging on postembryonic growth capacity of the root meristem; this signaling pathway requires CRN and CLV2 (PubMed:28607033).</text>
</comment>
<comment type="subcellular location">
    <molecule>CLE16p</molecule>
    <subcellularLocation>
        <location evidence="1">Secreted</location>
        <location evidence="1">Extracellular space</location>
    </subcellularLocation>
</comment>
<comment type="tissue specificity">
    <molecule>CLE16p</molecule>
    <text evidence="4">Expressed in roots, stems, apex, seedlings, leaves, flowers and siliques.</text>
</comment>
<comment type="PTM">
    <molecule>CLE16p</molecule>
    <text evidence="1">The O-glycosylation (arabinosylation) of the hydroxyproline Pro-98 enhances binding affinity of the CLE16p peptide for its receptor.</text>
</comment>
<comment type="similarity">
    <text evidence="8">Belongs to the CLV3/ESR signal peptide family.</text>
</comment>
<evidence type="ECO:0000250" key="1">
    <source>
        <dbReference type="UniProtKB" id="O49519"/>
    </source>
</evidence>
<evidence type="ECO:0000255" key="2"/>
<evidence type="ECO:0000256" key="3">
    <source>
        <dbReference type="SAM" id="MobiDB-lite"/>
    </source>
</evidence>
<evidence type="ECO:0000269" key="4">
    <source>
    </source>
</evidence>
<evidence type="ECO:0000269" key="5">
    <source>
    </source>
</evidence>
<evidence type="ECO:0000269" key="6">
    <source>
    </source>
</evidence>
<evidence type="ECO:0000303" key="7">
    <source>
    </source>
</evidence>
<evidence type="ECO:0000305" key="8"/>
<evidence type="ECO:0000312" key="9">
    <source>
        <dbReference type="Araport" id="AT2G01505"/>
    </source>
</evidence>
<evidence type="ECO:0000312" key="10">
    <source>
        <dbReference type="EMBL" id="AAM15061.1"/>
    </source>
</evidence>
<proteinExistence type="evidence at transcript level"/>
<gene>
    <name evidence="7" type="primary">CLE16</name>
    <name evidence="9" type="ordered locus">At2g01505</name>
    <name evidence="10" type="ORF">F2I9</name>
</gene>
<dbReference type="EMBL" id="AC005560">
    <property type="protein sequence ID" value="AAM15061.1"/>
    <property type="molecule type" value="Genomic_DNA"/>
</dbReference>
<dbReference type="EMBL" id="CP002685">
    <property type="protein sequence ID" value="AEC05462.1"/>
    <property type="molecule type" value="Genomic_DNA"/>
</dbReference>
<dbReference type="EMBL" id="BT011705">
    <property type="protein sequence ID" value="AAS49068.1"/>
    <property type="molecule type" value="mRNA"/>
</dbReference>
<dbReference type="RefSeq" id="NP_001318176.1">
    <property type="nucleotide sequence ID" value="NM_001335066.1"/>
</dbReference>
<dbReference type="SMR" id="Q8S8M2"/>
<dbReference type="STRING" id="3702.Q8S8M2"/>
<dbReference type="GlyCosmos" id="Q8S8M2">
    <property type="glycosylation" value="1 site, No reported glycans"/>
</dbReference>
<dbReference type="iPTMnet" id="Q8S8M2"/>
<dbReference type="PaxDb" id="3702-AT2G01505.1"/>
<dbReference type="EnsemblPlants" id="AT2G01505.1">
    <property type="protein sequence ID" value="AT2G01505.1"/>
    <property type="gene ID" value="AT2G01505"/>
</dbReference>
<dbReference type="GeneID" id="28717514"/>
<dbReference type="Gramene" id="AT2G01505.1">
    <property type="protein sequence ID" value="AT2G01505.1"/>
    <property type="gene ID" value="AT2G01505"/>
</dbReference>
<dbReference type="KEGG" id="ath:AT2G01505"/>
<dbReference type="Araport" id="AT2G01505"/>
<dbReference type="TAIR" id="AT2G01505">
    <property type="gene designation" value="CLE16"/>
</dbReference>
<dbReference type="eggNOG" id="ENOG502SBUE">
    <property type="taxonomic scope" value="Eukaryota"/>
</dbReference>
<dbReference type="HOGENOM" id="CLU_140624_0_0_1"/>
<dbReference type="InParanoid" id="Q8S8M2"/>
<dbReference type="OMA" id="PFHEMAS"/>
<dbReference type="OrthoDB" id="1080769at2759"/>
<dbReference type="PhylomeDB" id="Q8S8M2"/>
<dbReference type="PRO" id="PR:Q8S8M2"/>
<dbReference type="Proteomes" id="UP000006548">
    <property type="component" value="Chromosome 2"/>
</dbReference>
<dbReference type="ExpressionAtlas" id="Q8S8M2">
    <property type="expression patterns" value="baseline and differential"/>
</dbReference>
<dbReference type="GO" id="GO:0048046">
    <property type="term" value="C:apoplast"/>
    <property type="evidence" value="ECO:0000255"/>
    <property type="project" value="TAIR"/>
</dbReference>
<dbReference type="GO" id="GO:0045168">
    <property type="term" value="P:cell-cell signaling involved in cell fate commitment"/>
    <property type="evidence" value="ECO:0000250"/>
    <property type="project" value="UniProtKB"/>
</dbReference>
<dbReference type="GO" id="GO:0010078">
    <property type="term" value="P:maintenance of root meristem identity"/>
    <property type="evidence" value="ECO:0000314"/>
    <property type="project" value="UniProtKB"/>
</dbReference>
<dbReference type="GO" id="GO:0010088">
    <property type="term" value="P:phloem development"/>
    <property type="evidence" value="ECO:0000314"/>
    <property type="project" value="UniProtKB"/>
</dbReference>
<dbReference type="GO" id="GO:0045595">
    <property type="term" value="P:regulation of cell differentiation"/>
    <property type="evidence" value="ECO:0000314"/>
    <property type="project" value="UniProtKB"/>
</dbReference>
<dbReference type="InterPro" id="IPR033249">
    <property type="entry name" value="CLE_plant"/>
</dbReference>
<dbReference type="PANTHER" id="PTHR34545">
    <property type="entry name" value="CLAVATA3/ESR (CLE)-RELATED PROTEIN 22"/>
    <property type="match status" value="1"/>
</dbReference>
<dbReference type="PANTHER" id="PTHR34545:SF7">
    <property type="entry name" value="CLAVATA3_ESR (CLE)-RELATED PROTEIN 16"/>
    <property type="match status" value="1"/>
</dbReference>
<accession>Q8S8M2</accession>
<protein>
    <recommendedName>
        <fullName evidence="7">CLAVATA3/ESR (CLE)-related protein 16</fullName>
    </recommendedName>
    <component>
        <recommendedName>
            <fullName evidence="7">CLE16p</fullName>
        </recommendedName>
    </component>
</protein>
<reference key="1">
    <citation type="journal article" date="1999" name="Nature">
        <title>Sequence and analysis of chromosome 2 of the plant Arabidopsis thaliana.</title>
        <authorList>
            <person name="Lin X."/>
            <person name="Kaul S."/>
            <person name="Rounsley S.D."/>
            <person name="Shea T.P."/>
            <person name="Benito M.-I."/>
            <person name="Town C.D."/>
            <person name="Fujii C.Y."/>
            <person name="Mason T.M."/>
            <person name="Bowman C.L."/>
            <person name="Barnstead M.E."/>
            <person name="Feldblyum T.V."/>
            <person name="Buell C.R."/>
            <person name="Ketchum K.A."/>
            <person name="Lee J.J."/>
            <person name="Ronning C.M."/>
            <person name="Koo H.L."/>
            <person name="Moffat K.S."/>
            <person name="Cronin L.A."/>
            <person name="Shen M."/>
            <person name="Pai G."/>
            <person name="Van Aken S."/>
            <person name="Umayam L."/>
            <person name="Tallon L.J."/>
            <person name="Gill J.E."/>
            <person name="Adams M.D."/>
            <person name="Carrera A.J."/>
            <person name="Creasy T.H."/>
            <person name="Goodman H.M."/>
            <person name="Somerville C.R."/>
            <person name="Copenhaver G.P."/>
            <person name="Preuss D."/>
            <person name="Nierman W.C."/>
            <person name="White O."/>
            <person name="Eisen J.A."/>
            <person name="Salzberg S.L."/>
            <person name="Fraser C.M."/>
            <person name="Venter J.C."/>
        </authorList>
    </citation>
    <scope>NUCLEOTIDE SEQUENCE [LARGE SCALE GENOMIC DNA]</scope>
    <source>
        <strain>cv. Columbia</strain>
    </source>
</reference>
<reference key="2">
    <citation type="journal article" date="2017" name="Plant J.">
        <title>Araport11: a complete reannotation of the Arabidopsis thaliana reference genome.</title>
        <authorList>
            <person name="Cheng C.Y."/>
            <person name="Krishnakumar V."/>
            <person name="Chan A.P."/>
            <person name="Thibaud-Nissen F."/>
            <person name="Schobel S."/>
            <person name="Town C.D."/>
        </authorList>
    </citation>
    <scope>GENOME REANNOTATION</scope>
    <source>
        <strain>cv. Columbia</strain>
    </source>
</reference>
<reference key="3">
    <citation type="submission" date="2004-03" db="EMBL/GenBank/DDBJ databases">
        <title>Arabidopsis ORF clones.</title>
        <authorList>
            <person name="Cheuk R.F."/>
            <person name="Chen H."/>
            <person name="Kim C.J."/>
            <person name="Shinn P."/>
            <person name="Carninci P."/>
            <person name="Hayashizaki Y."/>
            <person name="Ishida J."/>
            <person name="Kamiya A."/>
            <person name="Kawai J."/>
            <person name="Narusaka M."/>
            <person name="Sakurai T."/>
            <person name="Satou M."/>
            <person name="Seki M."/>
            <person name="Shinozaki K."/>
            <person name="Ecker J.R."/>
        </authorList>
    </citation>
    <scope>NUCLEOTIDE SEQUENCE [LARGE SCALE MRNA]</scope>
    <source>
        <strain>cv. Columbia</strain>
    </source>
</reference>
<reference key="4">
    <citation type="journal article" date="2001" name="Plant Physiol.">
        <title>A large family of genes that share homology with CLAVATA3.</title>
        <authorList>
            <person name="Cock J.M."/>
            <person name="McCormick S."/>
        </authorList>
    </citation>
    <scope>GENE FAMILY</scope>
    <scope>NOMENCLATURE</scope>
</reference>
<reference key="5">
    <citation type="journal article" date="2003" name="Plant Mol. Biol.">
        <title>The Arabidopsis CLV3-like (CLE) genes are expressed in diverse tissues and encode secreted proteins.</title>
        <authorList>
            <person name="Sharma V.K."/>
            <person name="Ramirez J."/>
            <person name="Fletcher J.C."/>
        </authorList>
    </citation>
    <scope>TISSUE SPECIFICITY</scope>
</reference>
<reference key="6">
    <citation type="journal article" date="2006" name="Plant Physiol.">
        <title>Gain-of-function phenotypes of many CLAVATA3/ESR genes, including four new family members, correlate with tandem variations in the conserved CLAVATA3/ESR domain.</title>
        <authorList>
            <person name="Strabala T.J."/>
            <person name="O'donnell P.J."/>
            <person name="Smit A.-M."/>
            <person name="Ampomah-Dwamena C."/>
            <person name="Martin E.J."/>
            <person name="Netzler N."/>
            <person name="Nieuwenhuizen N.J."/>
            <person name="Quinn B.D."/>
            <person name="Foote H.C.C."/>
            <person name="Hudson K.R."/>
        </authorList>
    </citation>
    <scope>GENE FAMILY</scope>
</reference>
<reference key="7">
    <citation type="journal article" date="2006" name="Science">
        <title>Dodeca-CLE peptides as suppressors of plant stem cell differentiation.</title>
        <authorList>
            <person name="Ito Y."/>
            <person name="Nakanomyo I."/>
            <person name="Motose H."/>
            <person name="Iwamoto K."/>
            <person name="Sawa S."/>
            <person name="Dohmae N."/>
            <person name="Fukuda H."/>
        </authorList>
    </citation>
    <scope>FUNCTION</scope>
</reference>
<reference key="8">
    <citation type="journal article" date="2008" name="Cell. Mol. Life Sci.">
        <title>The CLE family of plant polypeptide signaling molecules.</title>
        <authorList>
            <person name="Jun J.H."/>
            <person name="Fiume E."/>
            <person name="Fletcher J.C."/>
        </authorList>
    </citation>
    <scope>REVIEW</scope>
</reference>
<reference key="9">
    <citation type="journal article" date="2008" name="Curr. Opin. Plant Biol.">
        <title>Diverse and conserved roles of CLE peptides.</title>
        <authorList>
            <person name="Mitchum M.G."/>
            <person name="Wang X."/>
            <person name="Davis E.L."/>
        </authorList>
    </citation>
    <scope>REVIEW</scope>
</reference>
<reference key="10">
    <citation type="journal article" date="2010" name="Protoplasma">
        <title>CLE peptide signaling during plant development.</title>
        <authorList>
            <person name="Wang G."/>
            <person name="Fiers M."/>
        </authorList>
    </citation>
    <scope>REVIEW</scope>
</reference>
<reference key="11">
    <citation type="journal article" date="2017" name="EMBO Rep.">
        <title>Perception of root-active CLE peptides requires CORYNE function in the phloem vasculature.</title>
        <authorList>
            <person name="Hazak O."/>
            <person name="Brandt B."/>
            <person name="Cattaneo P."/>
            <person name="Santiago J."/>
            <person name="Rodriguez-Villalon A."/>
            <person name="Hothorn M."/>
            <person name="Hardtke C.S."/>
        </authorList>
    </citation>
    <scope>FUNCTION</scope>
    <source>
        <strain>cv. Columbia</strain>
    </source>
</reference>
<feature type="signal peptide" evidence="2">
    <location>
        <begin position="1"/>
        <end position="21"/>
    </location>
</feature>
<feature type="chain" id="PRO_0000401261" description="CLAVATA3/ESR (CLE)-related protein 16">
    <location>
        <begin position="22"/>
        <end position="103"/>
    </location>
</feature>
<feature type="peptide" id="PRO_0000401262" description="CLE16p" evidence="1">
    <location>
        <begin position="92"/>
        <end position="103"/>
    </location>
</feature>
<feature type="region of interest" description="Disordered" evidence="3">
    <location>
        <begin position="71"/>
        <end position="103"/>
    </location>
</feature>
<feature type="compositionally biased region" description="Basic and acidic residues" evidence="3">
    <location>
        <begin position="76"/>
        <end position="93"/>
    </location>
</feature>
<feature type="modified residue" description="Hydroxyproline" evidence="1">
    <location>
        <position position="98"/>
    </location>
</feature>
<feature type="glycosylation site" description="O-linked (Ara...) hydroxyproline" evidence="1">
    <location>
        <position position="98"/>
    </location>
</feature>
<keyword id="KW-0217">Developmental protein</keyword>
<keyword id="KW-0221">Differentiation</keyword>
<keyword id="KW-0325">Glycoprotein</keyword>
<keyword id="KW-0379">Hydroxylation</keyword>
<keyword id="KW-1185">Reference proteome</keyword>
<keyword id="KW-0964">Secreted</keyword>
<keyword id="KW-0732">Signal</keyword>
<name>CLE16_ARATH</name>